<evidence type="ECO:0000255" key="1">
    <source>
        <dbReference type="HAMAP-Rule" id="MF_00759"/>
    </source>
</evidence>
<organism>
    <name type="scientific">Actinobacillus pleuropneumoniae serotype 3 (strain JL03)</name>
    <dbReference type="NCBI Taxonomy" id="434271"/>
    <lineage>
        <taxon>Bacteria</taxon>
        <taxon>Pseudomonadati</taxon>
        <taxon>Pseudomonadota</taxon>
        <taxon>Gammaproteobacteria</taxon>
        <taxon>Pasteurellales</taxon>
        <taxon>Pasteurellaceae</taxon>
        <taxon>Actinobacillus</taxon>
    </lineage>
</organism>
<comment type="function">
    <text evidence="1">Sequence-specific endonuclease that cleaves unmethylated GATC sequences. It is involved in DNA mismatch repair.</text>
</comment>
<comment type="subcellular location">
    <subcellularLocation>
        <location evidence="1">Cytoplasm</location>
    </subcellularLocation>
</comment>
<comment type="similarity">
    <text evidence="1">Belongs to the MutH family.</text>
</comment>
<sequence length="226" mass="25692">MQLSTFSHSEEELLEKANWLAGFTLGEIAHQLNIDVPLDLRRDKGWVGQLIETALGAKAGSKPEQDFAHLGIELKTIPINHKGFPLETTFVSLAPLTQNIGITWQTSHVRHKLQKVLWIPVQGERHIPVAERHIGQPILWAPSCEQEQQLKNDWEELMEYIIFGRLNEINATLGEVLQLRPKGRNSRSLTAAVNQQGERVQSLPLGFYLRKQFTAEILQNFLRSPL</sequence>
<dbReference type="EMBL" id="CP000687">
    <property type="protein sequence ID" value="ABY69684.1"/>
    <property type="molecule type" value="Genomic_DNA"/>
</dbReference>
<dbReference type="RefSeq" id="WP_005610420.1">
    <property type="nucleotide sequence ID" value="NC_010278.1"/>
</dbReference>
<dbReference type="SMR" id="B0BQ49"/>
<dbReference type="KEGG" id="apj:APJL_1128"/>
<dbReference type="HOGENOM" id="CLU_086669_0_0_6"/>
<dbReference type="Proteomes" id="UP000008547">
    <property type="component" value="Chromosome"/>
</dbReference>
<dbReference type="GO" id="GO:0005737">
    <property type="term" value="C:cytoplasm"/>
    <property type="evidence" value="ECO:0007669"/>
    <property type="project" value="UniProtKB-SubCell"/>
</dbReference>
<dbReference type="GO" id="GO:0003677">
    <property type="term" value="F:DNA binding"/>
    <property type="evidence" value="ECO:0007669"/>
    <property type="project" value="InterPro"/>
</dbReference>
<dbReference type="GO" id="GO:0004519">
    <property type="term" value="F:endonuclease activity"/>
    <property type="evidence" value="ECO:0007669"/>
    <property type="project" value="UniProtKB-UniRule"/>
</dbReference>
<dbReference type="GO" id="GO:0006304">
    <property type="term" value="P:DNA modification"/>
    <property type="evidence" value="ECO:0007669"/>
    <property type="project" value="InterPro"/>
</dbReference>
<dbReference type="GO" id="GO:0006298">
    <property type="term" value="P:mismatch repair"/>
    <property type="evidence" value="ECO:0007669"/>
    <property type="project" value="UniProtKB-UniRule"/>
</dbReference>
<dbReference type="CDD" id="cd00583">
    <property type="entry name" value="MutH-like"/>
    <property type="match status" value="1"/>
</dbReference>
<dbReference type="Gene3D" id="3.40.600.10">
    <property type="entry name" value="DNA mismatch repair MutH/Restriction endonuclease, type II"/>
    <property type="match status" value="1"/>
</dbReference>
<dbReference type="HAMAP" id="MF_00759">
    <property type="entry name" value="MutH"/>
    <property type="match status" value="1"/>
</dbReference>
<dbReference type="InterPro" id="IPR004230">
    <property type="entry name" value="DNA_mismatch_repair_MutH"/>
</dbReference>
<dbReference type="InterPro" id="IPR011337">
    <property type="entry name" value="DNA_rep_MutH/RE_typeII_Sau3AI"/>
</dbReference>
<dbReference type="InterPro" id="IPR037057">
    <property type="entry name" value="DNA_rep_MutH/T2_RE_sf"/>
</dbReference>
<dbReference type="InterPro" id="IPR011335">
    <property type="entry name" value="Restrct_endonuc-II-like"/>
</dbReference>
<dbReference type="NCBIfam" id="TIGR02248">
    <property type="entry name" value="mutH_TIGR"/>
    <property type="match status" value="1"/>
</dbReference>
<dbReference type="NCBIfam" id="NF003458">
    <property type="entry name" value="PRK05070.1"/>
    <property type="match status" value="1"/>
</dbReference>
<dbReference type="Pfam" id="PF02976">
    <property type="entry name" value="MutH"/>
    <property type="match status" value="1"/>
</dbReference>
<dbReference type="SMART" id="SM00927">
    <property type="entry name" value="MutH"/>
    <property type="match status" value="1"/>
</dbReference>
<dbReference type="SUPFAM" id="SSF52980">
    <property type="entry name" value="Restriction endonuclease-like"/>
    <property type="match status" value="1"/>
</dbReference>
<name>MUTH_ACTPJ</name>
<accession>B0BQ49</accession>
<gene>
    <name evidence="1" type="primary">mutH</name>
    <name type="ordered locus">APJL_1128</name>
</gene>
<keyword id="KW-0963">Cytoplasm</keyword>
<keyword id="KW-0227">DNA damage</keyword>
<keyword id="KW-0234">DNA repair</keyword>
<keyword id="KW-0255">Endonuclease</keyword>
<keyword id="KW-0378">Hydrolase</keyword>
<keyword id="KW-0540">Nuclease</keyword>
<feature type="chain" id="PRO_1000133459" description="DNA mismatch repair protein MutH">
    <location>
        <begin position="1"/>
        <end position="226"/>
    </location>
</feature>
<reference key="1">
    <citation type="journal article" date="2008" name="PLoS ONE">
        <title>Genome biology of Actinobacillus pleuropneumoniae JL03, an isolate of serotype 3 prevalent in China.</title>
        <authorList>
            <person name="Xu Z."/>
            <person name="Zhou Y."/>
            <person name="Li L."/>
            <person name="Zhou R."/>
            <person name="Xiao S."/>
            <person name="Wan Y."/>
            <person name="Zhang S."/>
            <person name="Wang K."/>
            <person name="Li W."/>
            <person name="Li L."/>
            <person name="Jin H."/>
            <person name="Kang M."/>
            <person name="Dalai B."/>
            <person name="Li T."/>
            <person name="Liu L."/>
            <person name="Cheng Y."/>
            <person name="Zhang L."/>
            <person name="Xu T."/>
            <person name="Zheng H."/>
            <person name="Pu S."/>
            <person name="Wang B."/>
            <person name="Gu W."/>
            <person name="Zhang X.L."/>
            <person name="Zhu G.-F."/>
            <person name="Wang S."/>
            <person name="Zhao G.-P."/>
            <person name="Chen H."/>
        </authorList>
    </citation>
    <scope>NUCLEOTIDE SEQUENCE [LARGE SCALE GENOMIC DNA]</scope>
    <source>
        <strain>JL03</strain>
    </source>
</reference>
<proteinExistence type="inferred from homology"/>
<protein>
    <recommendedName>
        <fullName evidence="1">DNA mismatch repair protein MutH</fullName>
    </recommendedName>
    <alternativeName>
        <fullName evidence="1">Methyl-directed mismatch repair protein</fullName>
    </alternativeName>
</protein>